<evidence type="ECO:0000255" key="1">
    <source>
        <dbReference type="HAMAP-Rule" id="MF_00083"/>
    </source>
</evidence>
<dbReference type="EC" id="3.1.1.29" evidence="1"/>
<dbReference type="EMBL" id="CP000822">
    <property type="protein sequence ID" value="ABV12399.1"/>
    <property type="molecule type" value="Genomic_DNA"/>
</dbReference>
<dbReference type="RefSeq" id="WP_012132143.1">
    <property type="nucleotide sequence ID" value="NC_009792.1"/>
</dbReference>
<dbReference type="SMR" id="A8AFY6"/>
<dbReference type="STRING" id="290338.CKO_01259"/>
<dbReference type="GeneID" id="45135376"/>
<dbReference type="KEGG" id="cko:CKO_01259"/>
<dbReference type="HOGENOM" id="CLU_062456_3_1_6"/>
<dbReference type="OrthoDB" id="9800507at2"/>
<dbReference type="Proteomes" id="UP000008148">
    <property type="component" value="Chromosome"/>
</dbReference>
<dbReference type="GO" id="GO:0005737">
    <property type="term" value="C:cytoplasm"/>
    <property type="evidence" value="ECO:0007669"/>
    <property type="project" value="UniProtKB-SubCell"/>
</dbReference>
<dbReference type="GO" id="GO:0004045">
    <property type="term" value="F:peptidyl-tRNA hydrolase activity"/>
    <property type="evidence" value="ECO:0007669"/>
    <property type="project" value="UniProtKB-UniRule"/>
</dbReference>
<dbReference type="GO" id="GO:0000049">
    <property type="term" value="F:tRNA binding"/>
    <property type="evidence" value="ECO:0007669"/>
    <property type="project" value="UniProtKB-UniRule"/>
</dbReference>
<dbReference type="GO" id="GO:0006515">
    <property type="term" value="P:protein quality control for misfolded or incompletely synthesized proteins"/>
    <property type="evidence" value="ECO:0007669"/>
    <property type="project" value="UniProtKB-UniRule"/>
</dbReference>
<dbReference type="GO" id="GO:0072344">
    <property type="term" value="P:rescue of stalled ribosome"/>
    <property type="evidence" value="ECO:0007669"/>
    <property type="project" value="UniProtKB-UniRule"/>
</dbReference>
<dbReference type="CDD" id="cd00462">
    <property type="entry name" value="PTH"/>
    <property type="match status" value="1"/>
</dbReference>
<dbReference type="FunFam" id="3.40.50.1470:FF:000001">
    <property type="entry name" value="Peptidyl-tRNA hydrolase"/>
    <property type="match status" value="1"/>
</dbReference>
<dbReference type="Gene3D" id="3.40.50.1470">
    <property type="entry name" value="Peptidyl-tRNA hydrolase"/>
    <property type="match status" value="1"/>
</dbReference>
<dbReference type="HAMAP" id="MF_00083">
    <property type="entry name" value="Pept_tRNA_hydro_bact"/>
    <property type="match status" value="1"/>
</dbReference>
<dbReference type="InterPro" id="IPR001328">
    <property type="entry name" value="Pept_tRNA_hydro"/>
</dbReference>
<dbReference type="InterPro" id="IPR018171">
    <property type="entry name" value="Pept_tRNA_hydro_CS"/>
</dbReference>
<dbReference type="InterPro" id="IPR036416">
    <property type="entry name" value="Pept_tRNA_hydro_sf"/>
</dbReference>
<dbReference type="NCBIfam" id="TIGR00447">
    <property type="entry name" value="pth"/>
    <property type="match status" value="1"/>
</dbReference>
<dbReference type="PANTHER" id="PTHR17224">
    <property type="entry name" value="PEPTIDYL-TRNA HYDROLASE"/>
    <property type="match status" value="1"/>
</dbReference>
<dbReference type="PANTHER" id="PTHR17224:SF1">
    <property type="entry name" value="PEPTIDYL-TRNA HYDROLASE"/>
    <property type="match status" value="1"/>
</dbReference>
<dbReference type="Pfam" id="PF01195">
    <property type="entry name" value="Pept_tRNA_hydro"/>
    <property type="match status" value="1"/>
</dbReference>
<dbReference type="SUPFAM" id="SSF53178">
    <property type="entry name" value="Peptidyl-tRNA hydrolase-like"/>
    <property type="match status" value="1"/>
</dbReference>
<dbReference type="PROSITE" id="PS01195">
    <property type="entry name" value="PEPT_TRNA_HYDROL_1"/>
    <property type="match status" value="1"/>
</dbReference>
<dbReference type="PROSITE" id="PS01196">
    <property type="entry name" value="PEPT_TRNA_HYDROL_2"/>
    <property type="match status" value="1"/>
</dbReference>
<comment type="function">
    <text evidence="1">Hydrolyzes ribosome-free peptidyl-tRNAs (with 1 or more amino acids incorporated), which drop off the ribosome during protein synthesis, or as a result of ribosome stalling.</text>
</comment>
<comment type="function">
    <text evidence="1">Catalyzes the release of premature peptidyl moieties from peptidyl-tRNA molecules trapped in stalled 50S ribosomal subunits, and thus maintains levels of free tRNAs and 50S ribosomes.</text>
</comment>
<comment type="catalytic activity">
    <reaction evidence="1">
        <text>an N-acyl-L-alpha-aminoacyl-tRNA + H2O = an N-acyl-L-amino acid + a tRNA + H(+)</text>
        <dbReference type="Rhea" id="RHEA:54448"/>
        <dbReference type="Rhea" id="RHEA-COMP:10123"/>
        <dbReference type="Rhea" id="RHEA-COMP:13883"/>
        <dbReference type="ChEBI" id="CHEBI:15377"/>
        <dbReference type="ChEBI" id="CHEBI:15378"/>
        <dbReference type="ChEBI" id="CHEBI:59874"/>
        <dbReference type="ChEBI" id="CHEBI:78442"/>
        <dbReference type="ChEBI" id="CHEBI:138191"/>
        <dbReference type="EC" id="3.1.1.29"/>
    </reaction>
</comment>
<comment type="subunit">
    <text evidence="1">Monomer.</text>
</comment>
<comment type="subcellular location">
    <subcellularLocation>
        <location evidence="1">Cytoplasm</location>
    </subcellularLocation>
</comment>
<comment type="similarity">
    <text evidence="1">Belongs to the PTH family.</text>
</comment>
<organism>
    <name type="scientific">Citrobacter koseri (strain ATCC BAA-895 / CDC 4225-83 / SGSC4696)</name>
    <dbReference type="NCBI Taxonomy" id="290338"/>
    <lineage>
        <taxon>Bacteria</taxon>
        <taxon>Pseudomonadati</taxon>
        <taxon>Pseudomonadota</taxon>
        <taxon>Gammaproteobacteria</taxon>
        <taxon>Enterobacterales</taxon>
        <taxon>Enterobacteriaceae</taxon>
        <taxon>Citrobacter</taxon>
    </lineage>
</organism>
<name>PTH_CITK8</name>
<proteinExistence type="inferred from homology"/>
<reference key="1">
    <citation type="submission" date="2007-08" db="EMBL/GenBank/DDBJ databases">
        <authorList>
            <consortium name="The Citrobacter koseri Genome Sequencing Project"/>
            <person name="McClelland M."/>
            <person name="Sanderson E.K."/>
            <person name="Porwollik S."/>
            <person name="Spieth J."/>
            <person name="Clifton W.S."/>
            <person name="Latreille P."/>
            <person name="Courtney L."/>
            <person name="Wang C."/>
            <person name="Pepin K."/>
            <person name="Bhonagiri V."/>
            <person name="Nash W."/>
            <person name="Johnson M."/>
            <person name="Thiruvilangam P."/>
            <person name="Wilson R."/>
        </authorList>
    </citation>
    <scope>NUCLEOTIDE SEQUENCE [LARGE SCALE GENOMIC DNA]</scope>
    <source>
        <strain>ATCC BAA-895 / CDC 4225-83 / SGSC4696</strain>
    </source>
</reference>
<feature type="chain" id="PRO_1000010582" description="Peptidyl-tRNA hydrolase">
    <location>
        <begin position="1"/>
        <end position="194"/>
    </location>
</feature>
<feature type="active site" description="Proton acceptor" evidence="1">
    <location>
        <position position="21"/>
    </location>
</feature>
<feature type="binding site" evidence="1">
    <location>
        <position position="16"/>
    </location>
    <ligand>
        <name>tRNA</name>
        <dbReference type="ChEBI" id="CHEBI:17843"/>
    </ligand>
</feature>
<feature type="binding site" evidence="1">
    <location>
        <position position="67"/>
    </location>
    <ligand>
        <name>tRNA</name>
        <dbReference type="ChEBI" id="CHEBI:17843"/>
    </ligand>
</feature>
<feature type="binding site" evidence="1">
    <location>
        <position position="69"/>
    </location>
    <ligand>
        <name>tRNA</name>
        <dbReference type="ChEBI" id="CHEBI:17843"/>
    </ligand>
</feature>
<feature type="binding site" evidence="1">
    <location>
        <position position="115"/>
    </location>
    <ligand>
        <name>tRNA</name>
        <dbReference type="ChEBI" id="CHEBI:17843"/>
    </ligand>
</feature>
<feature type="site" description="Discriminates between blocked and unblocked aminoacyl-tRNA" evidence="1">
    <location>
        <position position="11"/>
    </location>
</feature>
<feature type="site" description="Stabilizes the basic form of H active site to accept a proton" evidence="1">
    <location>
        <position position="94"/>
    </location>
</feature>
<accession>A8AFY6</accession>
<gene>
    <name evidence="1" type="primary">pth</name>
    <name type="ordered locus">CKO_01259</name>
</gene>
<sequence>MTIKLIVGLANPGAEYAATRHNAGAWYVDLLAERLRAPLREEPKFFGYTSRVTLEGEDVRLLVPTTFMNLSGKAVGAMASFYRIMPDEILVAHDELDLPPGVAKFKLGGGHGGHNGLKDIINKLGNNPNFHRLRVGIGHPGDKNKVVGFVLGKPPVSEQKLIDDAIDEAARCTEVWFKEGLTKATNRLHAFKAQ</sequence>
<keyword id="KW-0963">Cytoplasm</keyword>
<keyword id="KW-0378">Hydrolase</keyword>
<keyword id="KW-1185">Reference proteome</keyword>
<keyword id="KW-0694">RNA-binding</keyword>
<keyword id="KW-0820">tRNA-binding</keyword>
<protein>
    <recommendedName>
        <fullName evidence="1">Peptidyl-tRNA hydrolase</fullName>
        <shortName evidence="1">Pth</shortName>
        <ecNumber evidence="1">3.1.1.29</ecNumber>
    </recommendedName>
</protein>